<keyword id="KW-0004">4Fe-4S</keyword>
<keyword id="KW-0997">Cell inner membrane</keyword>
<keyword id="KW-1003">Cell membrane</keyword>
<keyword id="KW-0408">Iron</keyword>
<keyword id="KW-0411">Iron-sulfur</keyword>
<keyword id="KW-0472">Membrane</keyword>
<keyword id="KW-0479">Metal-binding</keyword>
<keyword id="KW-0520">NAD</keyword>
<keyword id="KW-0874">Quinone</keyword>
<keyword id="KW-0677">Repeat</keyword>
<keyword id="KW-1278">Translocase</keyword>
<keyword id="KW-0830">Ubiquinone</keyword>
<feature type="chain" id="PRO_1000143665" description="NADH-quinone oxidoreductase subunit I">
    <location>
        <begin position="1"/>
        <end position="159"/>
    </location>
</feature>
<feature type="domain" description="4Fe-4S ferredoxin-type 1" evidence="1">
    <location>
        <begin position="51"/>
        <end position="80"/>
    </location>
</feature>
<feature type="domain" description="4Fe-4S ferredoxin-type 2" evidence="1">
    <location>
        <begin position="90"/>
        <end position="119"/>
    </location>
</feature>
<feature type="binding site" evidence="1">
    <location>
        <position position="60"/>
    </location>
    <ligand>
        <name>[4Fe-4S] cluster</name>
        <dbReference type="ChEBI" id="CHEBI:49883"/>
        <label>1</label>
    </ligand>
</feature>
<feature type="binding site" evidence="1">
    <location>
        <position position="63"/>
    </location>
    <ligand>
        <name>[4Fe-4S] cluster</name>
        <dbReference type="ChEBI" id="CHEBI:49883"/>
        <label>1</label>
    </ligand>
</feature>
<feature type="binding site" evidence="1">
    <location>
        <position position="66"/>
    </location>
    <ligand>
        <name>[4Fe-4S] cluster</name>
        <dbReference type="ChEBI" id="CHEBI:49883"/>
        <label>1</label>
    </ligand>
</feature>
<feature type="binding site" evidence="1">
    <location>
        <position position="70"/>
    </location>
    <ligand>
        <name>[4Fe-4S] cluster</name>
        <dbReference type="ChEBI" id="CHEBI:49883"/>
        <label>2</label>
    </ligand>
</feature>
<feature type="binding site" evidence="1">
    <location>
        <position position="99"/>
    </location>
    <ligand>
        <name>[4Fe-4S] cluster</name>
        <dbReference type="ChEBI" id="CHEBI:49883"/>
        <label>2</label>
    </ligand>
</feature>
<feature type="binding site" evidence="1">
    <location>
        <position position="102"/>
    </location>
    <ligand>
        <name>[4Fe-4S] cluster</name>
        <dbReference type="ChEBI" id="CHEBI:49883"/>
        <label>2</label>
    </ligand>
</feature>
<feature type="binding site" evidence="1">
    <location>
        <position position="105"/>
    </location>
    <ligand>
        <name>[4Fe-4S] cluster</name>
        <dbReference type="ChEBI" id="CHEBI:49883"/>
        <label>2</label>
    </ligand>
</feature>
<feature type="binding site" evidence="1">
    <location>
        <position position="109"/>
    </location>
    <ligand>
        <name>[4Fe-4S] cluster</name>
        <dbReference type="ChEBI" id="CHEBI:49883"/>
        <label>1</label>
    </ligand>
</feature>
<accession>A8GPY5</accession>
<comment type="function">
    <text evidence="1">NDH-1 shuttles electrons from NADH, via FMN and iron-sulfur (Fe-S) centers, to quinones in the respiratory chain. The immediate electron acceptor for the enzyme in this species is believed to be ubiquinone. Couples the redox reaction to proton translocation (for every two electrons transferred, four hydrogen ions are translocated across the cytoplasmic membrane), and thus conserves the redox energy in a proton gradient.</text>
</comment>
<comment type="catalytic activity">
    <reaction evidence="1">
        <text>a quinone + NADH + 5 H(+)(in) = a quinol + NAD(+) + 4 H(+)(out)</text>
        <dbReference type="Rhea" id="RHEA:57888"/>
        <dbReference type="ChEBI" id="CHEBI:15378"/>
        <dbReference type="ChEBI" id="CHEBI:24646"/>
        <dbReference type="ChEBI" id="CHEBI:57540"/>
        <dbReference type="ChEBI" id="CHEBI:57945"/>
        <dbReference type="ChEBI" id="CHEBI:132124"/>
    </reaction>
</comment>
<comment type="cofactor">
    <cofactor evidence="1">
        <name>[4Fe-4S] cluster</name>
        <dbReference type="ChEBI" id="CHEBI:49883"/>
    </cofactor>
    <text evidence="1">Binds 2 [4Fe-4S] clusters per subunit.</text>
</comment>
<comment type="subunit">
    <text evidence="1">NDH-1 is composed of 14 different subunits. Subunits NuoA, H, J, K, L, M, N constitute the membrane sector of the complex.</text>
</comment>
<comment type="subcellular location">
    <subcellularLocation>
        <location evidence="1">Cell inner membrane</location>
        <topology evidence="1">Peripheral membrane protein</topology>
    </subcellularLocation>
</comment>
<comment type="similarity">
    <text evidence="1">Belongs to the complex I 23 kDa subunit family.</text>
</comment>
<organism>
    <name type="scientific">Rickettsia akari (strain Hartford)</name>
    <dbReference type="NCBI Taxonomy" id="293614"/>
    <lineage>
        <taxon>Bacteria</taxon>
        <taxon>Pseudomonadati</taxon>
        <taxon>Pseudomonadota</taxon>
        <taxon>Alphaproteobacteria</taxon>
        <taxon>Rickettsiales</taxon>
        <taxon>Rickettsiaceae</taxon>
        <taxon>Rickettsieae</taxon>
        <taxon>Rickettsia</taxon>
        <taxon>spotted fever group</taxon>
    </lineage>
</organism>
<name>NUOI_RICAH</name>
<protein>
    <recommendedName>
        <fullName evidence="1">NADH-quinone oxidoreductase subunit I</fullName>
        <ecNumber evidence="1">7.1.1.-</ecNumber>
    </recommendedName>
    <alternativeName>
        <fullName evidence="1">NADH dehydrogenase I subunit I</fullName>
    </alternativeName>
    <alternativeName>
        <fullName evidence="1">NDH-1 subunit I</fullName>
    </alternativeName>
</protein>
<proteinExistence type="inferred from homology"/>
<reference key="1">
    <citation type="submission" date="2007-09" db="EMBL/GenBank/DDBJ databases">
        <title>Complete genome sequence of Rickettsia akari.</title>
        <authorList>
            <person name="Madan A."/>
            <person name="Fahey J."/>
            <person name="Helton E."/>
            <person name="Ketteman M."/>
            <person name="Madan A."/>
            <person name="Rodrigues S."/>
            <person name="Sanchez A."/>
            <person name="Whiting M."/>
            <person name="Dasch G."/>
            <person name="Eremeeva M."/>
        </authorList>
    </citation>
    <scope>NUCLEOTIDE SEQUENCE [LARGE SCALE GENOMIC DNA]</scope>
    <source>
        <strain>Hartford</strain>
    </source>
</reference>
<sequence length="159" mass="18570">MINYLKSFFLYEIIRGMSLTLKYFFKPKVTINYPYEKSHVSPRFKGEHALRRYESGEERCIACKLCEAICPAQAIVIEADEREDGSRRTTRYDIDMTKCIYCGLCQEACPVDAIVEGPNFEFASLTHAALIYDKERLLQNGDRWEQALASKLHKDYEYR</sequence>
<evidence type="ECO:0000255" key="1">
    <source>
        <dbReference type="HAMAP-Rule" id="MF_01351"/>
    </source>
</evidence>
<gene>
    <name evidence="1" type="primary">nuoI</name>
    <name type="ordered locus">A1C_06135</name>
</gene>
<dbReference type="EC" id="7.1.1.-" evidence="1"/>
<dbReference type="EMBL" id="CP000847">
    <property type="protein sequence ID" value="ABV75460.1"/>
    <property type="molecule type" value="Genomic_DNA"/>
</dbReference>
<dbReference type="RefSeq" id="WP_012150089.1">
    <property type="nucleotide sequence ID" value="NC_009881.1"/>
</dbReference>
<dbReference type="SMR" id="A8GPY5"/>
<dbReference type="STRING" id="293614.A1C_06135"/>
<dbReference type="KEGG" id="rak:A1C_06135"/>
<dbReference type="eggNOG" id="COG1143">
    <property type="taxonomic scope" value="Bacteria"/>
</dbReference>
<dbReference type="HOGENOM" id="CLU_067218_5_1_5"/>
<dbReference type="Proteomes" id="UP000006830">
    <property type="component" value="Chromosome"/>
</dbReference>
<dbReference type="GO" id="GO:0005886">
    <property type="term" value="C:plasma membrane"/>
    <property type="evidence" value="ECO:0007669"/>
    <property type="project" value="UniProtKB-SubCell"/>
</dbReference>
<dbReference type="GO" id="GO:0051539">
    <property type="term" value="F:4 iron, 4 sulfur cluster binding"/>
    <property type="evidence" value="ECO:0007669"/>
    <property type="project" value="UniProtKB-KW"/>
</dbReference>
<dbReference type="GO" id="GO:0005506">
    <property type="term" value="F:iron ion binding"/>
    <property type="evidence" value="ECO:0007669"/>
    <property type="project" value="UniProtKB-UniRule"/>
</dbReference>
<dbReference type="GO" id="GO:0050136">
    <property type="term" value="F:NADH:ubiquinone reductase (non-electrogenic) activity"/>
    <property type="evidence" value="ECO:0007669"/>
    <property type="project" value="UniProtKB-UniRule"/>
</dbReference>
<dbReference type="GO" id="GO:0048038">
    <property type="term" value="F:quinone binding"/>
    <property type="evidence" value="ECO:0007669"/>
    <property type="project" value="UniProtKB-KW"/>
</dbReference>
<dbReference type="GO" id="GO:0009060">
    <property type="term" value="P:aerobic respiration"/>
    <property type="evidence" value="ECO:0007669"/>
    <property type="project" value="TreeGrafter"/>
</dbReference>
<dbReference type="FunFam" id="3.30.70.3270:FF:000001">
    <property type="entry name" value="NADH-quinone oxidoreductase subunit I 1"/>
    <property type="match status" value="1"/>
</dbReference>
<dbReference type="Gene3D" id="3.30.70.3270">
    <property type="match status" value="1"/>
</dbReference>
<dbReference type="HAMAP" id="MF_01351">
    <property type="entry name" value="NDH1_NuoI"/>
    <property type="match status" value="1"/>
</dbReference>
<dbReference type="InterPro" id="IPR017896">
    <property type="entry name" value="4Fe4S_Fe-S-bd"/>
</dbReference>
<dbReference type="InterPro" id="IPR017900">
    <property type="entry name" value="4Fe4S_Fe_S_CS"/>
</dbReference>
<dbReference type="InterPro" id="IPR010226">
    <property type="entry name" value="NADH_quinone_OxRdtase_chainI"/>
</dbReference>
<dbReference type="NCBIfam" id="TIGR01971">
    <property type="entry name" value="NuoI"/>
    <property type="match status" value="1"/>
</dbReference>
<dbReference type="NCBIfam" id="NF004538">
    <property type="entry name" value="PRK05888.1-4"/>
    <property type="match status" value="1"/>
</dbReference>
<dbReference type="NCBIfam" id="NF004539">
    <property type="entry name" value="PRK05888.1-5"/>
    <property type="match status" value="1"/>
</dbReference>
<dbReference type="PANTHER" id="PTHR10849:SF20">
    <property type="entry name" value="NADH DEHYDROGENASE [UBIQUINONE] IRON-SULFUR PROTEIN 8, MITOCHONDRIAL"/>
    <property type="match status" value="1"/>
</dbReference>
<dbReference type="PANTHER" id="PTHR10849">
    <property type="entry name" value="NADH DEHYDROGENASE UBIQUINONE IRON-SULFUR PROTEIN 8, MITOCHONDRIAL"/>
    <property type="match status" value="1"/>
</dbReference>
<dbReference type="Pfam" id="PF12838">
    <property type="entry name" value="Fer4_7"/>
    <property type="match status" value="1"/>
</dbReference>
<dbReference type="SUPFAM" id="SSF54862">
    <property type="entry name" value="4Fe-4S ferredoxins"/>
    <property type="match status" value="1"/>
</dbReference>
<dbReference type="PROSITE" id="PS00198">
    <property type="entry name" value="4FE4S_FER_1"/>
    <property type="match status" value="2"/>
</dbReference>
<dbReference type="PROSITE" id="PS51379">
    <property type="entry name" value="4FE4S_FER_2"/>
    <property type="match status" value="2"/>
</dbReference>